<feature type="initiator methionine" description="Removed" evidence="5">
    <location>
        <position position="1"/>
    </location>
</feature>
<feature type="chain" id="PRO_0000124834" description="Prefoldin subunit 1">
    <location>
        <begin position="2"/>
        <end position="109"/>
    </location>
</feature>
<feature type="modified residue" description="N-acetylserine" evidence="5">
    <location>
        <position position="2"/>
    </location>
</feature>
<feature type="sequence conflict" description="In Ref. 1; CAA89474." evidence="4" ref="1">
    <original>D</original>
    <variation>A</variation>
    <location>
        <position position="74"/>
    </location>
</feature>
<gene>
    <name type="primary">PFD1</name>
    <name type="synonym">GIM6</name>
    <name type="ordered locus">YJL179W</name>
    <name type="ORF">J0488</name>
</gene>
<proteinExistence type="evidence at protein level"/>
<name>PFD1_YEAST</name>
<sequence>MSQIAQEMTVSLRNARTQLDMVNQQLAYLDRQEKLAELTKKELESYPTDKVWRSCGKSFILQDKSKYVNDLSHDETVLLDQRKTLKIKKNYLETTVEKTIDNLKALMKN</sequence>
<reference key="1">
    <citation type="journal article" date="1996" name="EMBO J.">
        <title>Complete nucleotide sequence of Saccharomyces cerevisiae chromosome X.</title>
        <authorList>
            <person name="Galibert F."/>
            <person name="Alexandraki D."/>
            <person name="Baur A."/>
            <person name="Boles E."/>
            <person name="Chalwatzis N."/>
            <person name="Chuat J.-C."/>
            <person name="Coster F."/>
            <person name="Cziepluch C."/>
            <person name="de Haan M."/>
            <person name="Domdey H."/>
            <person name="Durand P."/>
            <person name="Entian K.-D."/>
            <person name="Gatius M."/>
            <person name="Goffeau A."/>
            <person name="Grivell L.A."/>
            <person name="Hennemann A."/>
            <person name="Herbert C.J."/>
            <person name="Heumann K."/>
            <person name="Hilger F."/>
            <person name="Hollenberg C.P."/>
            <person name="Huang M.-E."/>
            <person name="Jacq C."/>
            <person name="Jauniaux J.-C."/>
            <person name="Katsoulou C."/>
            <person name="Kirchrath L."/>
            <person name="Kleine K."/>
            <person name="Kordes E."/>
            <person name="Koetter P."/>
            <person name="Liebl S."/>
            <person name="Louis E.J."/>
            <person name="Manus V."/>
            <person name="Mewes H.-W."/>
            <person name="Miosga T."/>
            <person name="Obermaier B."/>
            <person name="Perea J."/>
            <person name="Pohl T.M."/>
            <person name="Portetelle D."/>
            <person name="Pujol A."/>
            <person name="Purnelle B."/>
            <person name="Ramezani Rad M."/>
            <person name="Rasmussen S.W."/>
            <person name="Rose M."/>
            <person name="Rossau R."/>
            <person name="Schaaff-Gerstenschlaeger I."/>
            <person name="Smits P.H.M."/>
            <person name="Scarcez T."/>
            <person name="Soriano N."/>
            <person name="To Van D."/>
            <person name="Tzermia M."/>
            <person name="Van Broekhoven A."/>
            <person name="Vandenbol M."/>
            <person name="Wedler H."/>
            <person name="von Wettstein D."/>
            <person name="Wambutt R."/>
            <person name="Zagulski M."/>
            <person name="Zollner A."/>
            <person name="Karpfinger-Hartl L."/>
        </authorList>
    </citation>
    <scope>NUCLEOTIDE SEQUENCE [LARGE SCALE GENOMIC DNA]</scope>
    <source>
        <strain>ATCC 204508 / S288c</strain>
    </source>
</reference>
<reference key="2">
    <citation type="journal article" date="2014" name="G3 (Bethesda)">
        <title>The reference genome sequence of Saccharomyces cerevisiae: Then and now.</title>
        <authorList>
            <person name="Engel S.R."/>
            <person name="Dietrich F.S."/>
            <person name="Fisk D.G."/>
            <person name="Binkley G."/>
            <person name="Balakrishnan R."/>
            <person name="Costanzo M.C."/>
            <person name="Dwight S.S."/>
            <person name="Hitz B.C."/>
            <person name="Karra K."/>
            <person name="Nash R.S."/>
            <person name="Weng S."/>
            <person name="Wong E.D."/>
            <person name="Lloyd P."/>
            <person name="Skrzypek M.S."/>
            <person name="Miyasato S.R."/>
            <person name="Simison M."/>
            <person name="Cherry J.M."/>
        </authorList>
    </citation>
    <scope>GENOME REANNOTATION</scope>
    <scope>SEQUENCE REVISION TO 74</scope>
    <source>
        <strain>ATCC 204508 / S288c</strain>
    </source>
</reference>
<reference key="3">
    <citation type="journal article" date="2007" name="Genome Res.">
        <title>Approaching a complete repository of sequence-verified protein-encoding clones for Saccharomyces cerevisiae.</title>
        <authorList>
            <person name="Hu Y."/>
            <person name="Rolfs A."/>
            <person name="Bhullar B."/>
            <person name="Murthy T.V.S."/>
            <person name="Zhu C."/>
            <person name="Berger M.F."/>
            <person name="Camargo A.A."/>
            <person name="Kelley F."/>
            <person name="McCarron S."/>
            <person name="Jepson D."/>
            <person name="Richardson A."/>
            <person name="Raphael J."/>
            <person name="Moreira D."/>
            <person name="Taycher E."/>
            <person name="Zuo D."/>
            <person name="Mohr S."/>
            <person name="Kane M.F."/>
            <person name="Williamson J."/>
            <person name="Simpson A.J.G."/>
            <person name="Bulyk M.L."/>
            <person name="Harlow E."/>
            <person name="Marsischky G."/>
            <person name="Kolodner R.D."/>
            <person name="LaBaer J."/>
        </authorList>
    </citation>
    <scope>NUCLEOTIDE SEQUENCE [GENOMIC DNA]</scope>
    <source>
        <strain>ATCC 204508 / S288c</strain>
    </source>
</reference>
<reference key="4">
    <citation type="journal article" date="1999" name="EMBO J.">
        <title>Compartmentation of protein folding in vivo: sequestration of non-native polypeptide by the chaperonin-GimC system.</title>
        <authorList>
            <person name="Siegers K."/>
            <person name="Waldmann T."/>
            <person name="Leroux M.R."/>
            <person name="Grein K."/>
            <person name="Shevchenko A."/>
            <person name="Schiebel E."/>
            <person name="Hartl F.U."/>
        </authorList>
    </citation>
    <scope>IDENTIFICATION IN THE PREFOLDIN COMPLEX</scope>
</reference>
<reference key="5">
    <citation type="journal article" date="2003" name="Nature">
        <title>Global analysis of protein localization in budding yeast.</title>
        <authorList>
            <person name="Huh W.-K."/>
            <person name="Falvo J.V."/>
            <person name="Gerke L.C."/>
            <person name="Carroll A.S."/>
            <person name="Howson R.W."/>
            <person name="Weissman J.S."/>
            <person name="O'Shea E.K."/>
        </authorList>
    </citation>
    <scope>SUBCELLULAR LOCATION [LARGE SCALE ANALYSIS]</scope>
</reference>
<reference key="6">
    <citation type="journal article" date="2003" name="Nature">
        <title>Global analysis of protein expression in yeast.</title>
        <authorList>
            <person name="Ghaemmaghami S."/>
            <person name="Huh W.-K."/>
            <person name="Bower K."/>
            <person name="Howson R.W."/>
            <person name="Belle A."/>
            <person name="Dephoure N."/>
            <person name="O'Shea E.K."/>
            <person name="Weissman J.S."/>
        </authorList>
    </citation>
    <scope>LEVEL OF PROTEIN EXPRESSION [LARGE SCALE ANALYSIS]</scope>
</reference>
<reference key="7">
    <citation type="journal article" date="2012" name="Proc. Natl. Acad. Sci. U.S.A.">
        <title>N-terminal acetylome analyses and functional insights of the N-terminal acetyltransferase NatB.</title>
        <authorList>
            <person name="Van Damme P."/>
            <person name="Lasa M."/>
            <person name="Polevoda B."/>
            <person name="Gazquez C."/>
            <person name="Elosegui-Artola A."/>
            <person name="Kim D.S."/>
            <person name="De Juan-Pardo E."/>
            <person name="Demeyer K."/>
            <person name="Hole K."/>
            <person name="Larrea E."/>
            <person name="Timmerman E."/>
            <person name="Prieto J."/>
            <person name="Arnesen T."/>
            <person name="Sherman F."/>
            <person name="Gevaert K."/>
            <person name="Aldabe R."/>
        </authorList>
    </citation>
    <scope>ACETYLATION [LARGE SCALE ANALYSIS] AT SER-2</scope>
    <scope>CLEAVAGE OF INITIATOR METHIONINE [LARGE SCALE ANALYSIS]</scope>
    <scope>IDENTIFICATION BY MASS SPECTROMETRY [LARGE SCALE ANALYSIS]</scope>
</reference>
<keyword id="KW-0007">Acetylation</keyword>
<keyword id="KW-0143">Chaperone</keyword>
<keyword id="KW-0963">Cytoplasm</keyword>
<keyword id="KW-1185">Reference proteome</keyword>
<dbReference type="EMBL" id="Z49454">
    <property type="protein sequence ID" value="CAA89474.1"/>
    <property type="molecule type" value="Genomic_DNA"/>
</dbReference>
<dbReference type="EMBL" id="AY558253">
    <property type="protein sequence ID" value="AAS56579.1"/>
    <property type="molecule type" value="Genomic_DNA"/>
</dbReference>
<dbReference type="EMBL" id="BK006943">
    <property type="protein sequence ID" value="DAA08626.2"/>
    <property type="molecule type" value="Genomic_DNA"/>
</dbReference>
<dbReference type="PIR" id="S56962">
    <property type="entry name" value="S56962"/>
</dbReference>
<dbReference type="RefSeq" id="NP_012356.2">
    <property type="nucleotide sequence ID" value="NM_001181612.2"/>
</dbReference>
<dbReference type="SMR" id="P46988"/>
<dbReference type="BioGRID" id="33582">
    <property type="interactions" value="298"/>
</dbReference>
<dbReference type="ComplexPortal" id="CPX-1671">
    <property type="entry name" value="Prefoldin co-chaperone complex"/>
</dbReference>
<dbReference type="DIP" id="DIP-2110N"/>
<dbReference type="FunCoup" id="P46988">
    <property type="interactions" value="117"/>
</dbReference>
<dbReference type="IntAct" id="P46988">
    <property type="interactions" value="7"/>
</dbReference>
<dbReference type="MINT" id="P46988"/>
<dbReference type="STRING" id="4932.YJL179W"/>
<dbReference type="iPTMnet" id="P46988"/>
<dbReference type="PaxDb" id="4932-YJL179W"/>
<dbReference type="PeptideAtlas" id="P46988"/>
<dbReference type="EnsemblFungi" id="YJL179W_mRNA">
    <property type="protein sequence ID" value="YJL179W"/>
    <property type="gene ID" value="YJL179W"/>
</dbReference>
<dbReference type="GeneID" id="853260"/>
<dbReference type="KEGG" id="sce:YJL179W"/>
<dbReference type="AGR" id="SGD:S000003715"/>
<dbReference type="SGD" id="S000003715">
    <property type="gene designation" value="PFD1"/>
</dbReference>
<dbReference type="VEuPathDB" id="FungiDB:YJL179W"/>
<dbReference type="eggNOG" id="ENOG502S3UF">
    <property type="taxonomic scope" value="Eukaryota"/>
</dbReference>
<dbReference type="HOGENOM" id="CLU_122140_1_1_1"/>
<dbReference type="InParanoid" id="P46988"/>
<dbReference type="OMA" id="WRSCGKM"/>
<dbReference type="OrthoDB" id="2015447at2759"/>
<dbReference type="BioCyc" id="YEAST:G3O-31614-MONOMER"/>
<dbReference type="BioGRID-ORCS" id="853260">
    <property type="hits" value="1 hit in 10 CRISPR screens"/>
</dbReference>
<dbReference type="PRO" id="PR:P46988"/>
<dbReference type="Proteomes" id="UP000002311">
    <property type="component" value="Chromosome X"/>
</dbReference>
<dbReference type="RNAct" id="P46988">
    <property type="molecule type" value="protein"/>
</dbReference>
<dbReference type="GO" id="GO:0005737">
    <property type="term" value="C:cytoplasm"/>
    <property type="evidence" value="ECO:0000318"/>
    <property type="project" value="GO_Central"/>
</dbReference>
<dbReference type="GO" id="GO:0016272">
    <property type="term" value="C:prefoldin complex"/>
    <property type="evidence" value="ECO:0000315"/>
    <property type="project" value="SGD"/>
</dbReference>
<dbReference type="GO" id="GO:0044183">
    <property type="term" value="F:protein folding chaperone"/>
    <property type="evidence" value="ECO:0000318"/>
    <property type="project" value="GO_Central"/>
</dbReference>
<dbReference type="GO" id="GO:0051082">
    <property type="term" value="F:unfolded protein binding"/>
    <property type="evidence" value="ECO:0000315"/>
    <property type="project" value="SGD"/>
</dbReference>
<dbReference type="GO" id="GO:0007010">
    <property type="term" value="P:cytoskeleton organization"/>
    <property type="evidence" value="ECO:0000315"/>
    <property type="project" value="SGD"/>
</dbReference>
<dbReference type="GO" id="GO:0032968">
    <property type="term" value="P:positive regulation of transcription elongation by RNA polymerase II"/>
    <property type="evidence" value="ECO:0000315"/>
    <property type="project" value="SGD"/>
</dbReference>
<dbReference type="GO" id="GO:0006457">
    <property type="term" value="P:protein folding"/>
    <property type="evidence" value="ECO:0000315"/>
    <property type="project" value="SGD"/>
</dbReference>
<dbReference type="FunFam" id="1.10.287.370:FF:000023">
    <property type="entry name" value="Pfd1p"/>
    <property type="match status" value="1"/>
</dbReference>
<dbReference type="Gene3D" id="1.10.287.370">
    <property type="match status" value="1"/>
</dbReference>
<dbReference type="InterPro" id="IPR002777">
    <property type="entry name" value="PFD_beta-like"/>
</dbReference>
<dbReference type="InterPro" id="IPR009053">
    <property type="entry name" value="Prefoldin"/>
</dbReference>
<dbReference type="PANTHER" id="PTHR20903:SF0">
    <property type="entry name" value="PREFOLDIN SUBUNIT 1"/>
    <property type="match status" value="1"/>
</dbReference>
<dbReference type="PANTHER" id="PTHR20903">
    <property type="entry name" value="PREFOLDIN SUBUNIT 1-RELATED"/>
    <property type="match status" value="1"/>
</dbReference>
<dbReference type="Pfam" id="PF01920">
    <property type="entry name" value="Prefoldin_2"/>
    <property type="match status" value="1"/>
</dbReference>
<dbReference type="SUPFAM" id="SSF46579">
    <property type="entry name" value="Prefoldin"/>
    <property type="match status" value="1"/>
</dbReference>
<accession>P46988</accession>
<accession>D6VW10</accession>
<accession>E9P8V7</accession>
<comment type="function">
    <text>Binds specifically to cytosolic chaperonin (c-CPN) and transfers target proteins to it. Binds to nascent polypeptide chain and promotes folding in an environment in which there are many competing pathways for nonnative proteins.</text>
</comment>
<comment type="subunit">
    <text evidence="3">Heterohexamer of two PFD-alpha type and four PFD-beta type subunits.</text>
</comment>
<comment type="subcellular location">
    <subcellularLocation>
        <location evidence="1">Cytoplasm</location>
    </subcellularLocation>
</comment>
<comment type="miscellaneous">
    <text evidence="2">Present with 721 molecules/cell in log phase SD medium.</text>
</comment>
<comment type="similarity">
    <text evidence="4">Belongs to the prefoldin subunit beta family.</text>
</comment>
<protein>
    <recommendedName>
        <fullName>Prefoldin subunit 1</fullName>
    </recommendedName>
    <alternativeName>
        <fullName>Genes involved in microtubule biogenesis protein 6</fullName>
    </alternativeName>
    <alternativeName>
        <fullName>Gim complex subunit 6</fullName>
        <shortName>GimC subunit 6</shortName>
    </alternativeName>
</protein>
<organism>
    <name type="scientific">Saccharomyces cerevisiae (strain ATCC 204508 / S288c)</name>
    <name type="common">Baker's yeast</name>
    <dbReference type="NCBI Taxonomy" id="559292"/>
    <lineage>
        <taxon>Eukaryota</taxon>
        <taxon>Fungi</taxon>
        <taxon>Dikarya</taxon>
        <taxon>Ascomycota</taxon>
        <taxon>Saccharomycotina</taxon>
        <taxon>Saccharomycetes</taxon>
        <taxon>Saccharomycetales</taxon>
        <taxon>Saccharomycetaceae</taxon>
        <taxon>Saccharomyces</taxon>
    </lineage>
</organism>
<evidence type="ECO:0000269" key="1">
    <source>
    </source>
</evidence>
<evidence type="ECO:0000269" key="2">
    <source>
    </source>
</evidence>
<evidence type="ECO:0000269" key="3">
    <source>
    </source>
</evidence>
<evidence type="ECO:0000305" key="4"/>
<evidence type="ECO:0007744" key="5">
    <source>
    </source>
</evidence>